<keyword id="KW-0131">Cell cycle</keyword>
<keyword id="KW-0132">Cell division</keyword>
<keyword id="KW-1003">Cell membrane</keyword>
<keyword id="KW-0175">Coiled coil</keyword>
<keyword id="KW-0472">Membrane</keyword>
<keyword id="KW-0717">Septation</keyword>
<keyword id="KW-0812">Transmembrane</keyword>
<keyword id="KW-1133">Transmembrane helix</keyword>
<name>EZRA_STRPQ</name>
<proteinExistence type="inferred from homology"/>
<organism>
    <name type="scientific">Streptococcus pyogenes serotype M3 (strain SSI-1)</name>
    <dbReference type="NCBI Taxonomy" id="193567"/>
    <lineage>
        <taxon>Bacteria</taxon>
        <taxon>Bacillati</taxon>
        <taxon>Bacillota</taxon>
        <taxon>Bacilli</taxon>
        <taxon>Lactobacillales</taxon>
        <taxon>Streptococcaceae</taxon>
        <taxon>Streptococcus</taxon>
    </lineage>
</organism>
<reference key="1">
    <citation type="journal article" date="2003" name="Genome Res.">
        <title>Genome sequence of an M3 strain of Streptococcus pyogenes reveals a large-scale genomic rearrangement in invasive strains and new insights into phage evolution.</title>
        <authorList>
            <person name="Nakagawa I."/>
            <person name="Kurokawa K."/>
            <person name="Yamashita A."/>
            <person name="Nakata M."/>
            <person name="Tomiyasu Y."/>
            <person name="Okahashi N."/>
            <person name="Kawabata S."/>
            <person name="Yamazaki K."/>
            <person name="Shiba T."/>
            <person name="Yasunaga T."/>
            <person name="Hayashi H."/>
            <person name="Hattori M."/>
            <person name="Hamada S."/>
        </authorList>
    </citation>
    <scope>NUCLEOTIDE SEQUENCE [LARGE SCALE GENOMIC DNA]</scope>
    <source>
        <strain>SSI-1</strain>
    </source>
</reference>
<evidence type="ECO:0000255" key="1">
    <source>
        <dbReference type="HAMAP-Rule" id="MF_00728"/>
    </source>
</evidence>
<accession>P0DA99</accession>
<accession>Q8K839</accession>
<feature type="chain" id="PRO_0000411337" description="Septation ring formation regulator EzrA">
    <location>
        <begin position="1"/>
        <end position="574"/>
    </location>
</feature>
<feature type="topological domain" description="Extracellular" evidence="1">
    <location>
        <begin position="1"/>
        <end position="7"/>
    </location>
</feature>
<feature type="transmembrane region" description="Helical" evidence="1">
    <location>
        <begin position="8"/>
        <end position="26"/>
    </location>
</feature>
<feature type="topological domain" description="Cytoplasmic" evidence="1">
    <location>
        <begin position="27"/>
        <end position="574"/>
    </location>
</feature>
<feature type="coiled-coil region" evidence="1">
    <location>
        <begin position="102"/>
        <end position="141"/>
    </location>
</feature>
<feature type="coiled-coil region" evidence="1">
    <location>
        <begin position="274"/>
        <end position="350"/>
    </location>
</feature>
<feature type="coiled-coil region" evidence="1">
    <location>
        <begin position="459"/>
        <end position="520"/>
    </location>
</feature>
<sequence length="574" mass="66062">MSSGIILLIVAIVLLVIIAYLVGVIIRKRNDSLITSLEERKQALFALPVNDEIEEVKSLHLIGQSQTSFREWNQKWVDLTVNSFADIENHIFEAENLNDTFNFIRAKHEINSVESQLNLVEEDIASIREALNILKEQEEKNSARVTHALDLYEKLQASISENEDNFGSTMPEIDKQMKNIETEFSQFVALNSSGDPVEASEVLDRAEEHTIALGQITEQIPAIVAKLEDDFPDQLDDLETGYRRLLEENYHFPEKNIEARFQEIRESIRANSSELVTLDLDRAREENTHIQERIDSLYEVFEREIAAYKVAAKNSKMLPRYLAHVKRNNEQLKDEIARLSRKYILSETESLTVKAFEKDIKEIEDSTLAVAEQFGLQEKPFSELQVTFERSIKTLTNVESGQMDVFAAVKDIEKIESQARHNLDVYVTQLHMIKRYMEKRHLPGIPQDFLSAFFTTSSQLEALMDELSRGRINIEAVSRLSEVATVAIANLEDLTYQVVQNATLTEQLLQYSNRYRSFEAGVQSSFEHALRLFEVENDYQASFDEISYALETVEPGVTDRFVNSYEKTREHIRF</sequence>
<comment type="function">
    <text evidence="1">Negative regulator of FtsZ ring formation; modulates the frequency and position of FtsZ ring formation. Inhibits FtsZ ring formation at polar sites. Interacts either with FtsZ or with one of its binding partners to promote depolymerization.</text>
</comment>
<comment type="subcellular location">
    <subcellularLocation>
        <location>Cell membrane</location>
        <topology>Single-pass membrane protein</topology>
    </subcellularLocation>
    <text evidence="1">Colocalized with FtsZ to the nascent septal site.</text>
</comment>
<comment type="similarity">
    <text evidence="1">Belongs to the EzrA family.</text>
</comment>
<dbReference type="EMBL" id="BA000034">
    <property type="protein sequence ID" value="BAC64472.1"/>
    <property type="molecule type" value="Genomic_DNA"/>
</dbReference>
<dbReference type="RefSeq" id="WP_002990455.1">
    <property type="nucleotide sequence ID" value="NC_004606.1"/>
</dbReference>
<dbReference type="SMR" id="P0DA99"/>
<dbReference type="GeneID" id="69901136"/>
<dbReference type="KEGG" id="sps:SPs1377"/>
<dbReference type="HOGENOM" id="CLU_034079_2_0_9"/>
<dbReference type="GO" id="GO:0005886">
    <property type="term" value="C:plasma membrane"/>
    <property type="evidence" value="ECO:0007669"/>
    <property type="project" value="UniProtKB-SubCell"/>
</dbReference>
<dbReference type="GO" id="GO:0005940">
    <property type="term" value="C:septin ring"/>
    <property type="evidence" value="ECO:0007669"/>
    <property type="project" value="InterPro"/>
</dbReference>
<dbReference type="GO" id="GO:0000917">
    <property type="term" value="P:division septum assembly"/>
    <property type="evidence" value="ECO:0007669"/>
    <property type="project" value="UniProtKB-KW"/>
</dbReference>
<dbReference type="GO" id="GO:0000921">
    <property type="term" value="P:septin ring assembly"/>
    <property type="evidence" value="ECO:0007669"/>
    <property type="project" value="InterPro"/>
</dbReference>
<dbReference type="HAMAP" id="MF_00728">
    <property type="entry name" value="EzrA"/>
    <property type="match status" value="1"/>
</dbReference>
<dbReference type="InterPro" id="IPR010379">
    <property type="entry name" value="EzrA"/>
</dbReference>
<dbReference type="NCBIfam" id="NF003407">
    <property type="entry name" value="PRK04778.1-1"/>
    <property type="match status" value="1"/>
</dbReference>
<dbReference type="NCBIfam" id="NF003410">
    <property type="entry name" value="PRK04778.1-4"/>
    <property type="match status" value="1"/>
</dbReference>
<dbReference type="Pfam" id="PF06160">
    <property type="entry name" value="EzrA"/>
    <property type="match status" value="1"/>
</dbReference>
<protein>
    <recommendedName>
        <fullName evidence="1">Septation ring formation regulator EzrA</fullName>
    </recommendedName>
</protein>
<gene>
    <name evidence="1" type="primary">ezrA</name>
    <name type="ordered locus">SPs1377</name>
</gene>